<gene>
    <name evidence="1" type="primary">gap</name>
    <name type="ordered locus">Hbut_0939</name>
</gene>
<keyword id="KW-0963">Cytoplasm</keyword>
<keyword id="KW-0324">Glycolysis</keyword>
<keyword id="KW-0520">NAD</keyword>
<keyword id="KW-0521">NADP</keyword>
<keyword id="KW-0560">Oxidoreductase</keyword>
<keyword id="KW-1185">Reference proteome</keyword>
<proteinExistence type="inferred from homology"/>
<protein>
    <recommendedName>
        <fullName evidence="1">Glyceraldehyde-3-phosphate dehydrogenase</fullName>
        <shortName evidence="1">GAPDH</shortName>
        <ecNumber evidence="1">1.2.1.59</ecNumber>
    </recommendedName>
    <alternativeName>
        <fullName evidence="1">NAD(P)-dependent glyceraldehyde-3-phosphate dehydrogenase</fullName>
    </alternativeName>
</protein>
<organism>
    <name type="scientific">Hyperthermus butylicus (strain DSM 5456 / JCM 9403 / PLM1-5)</name>
    <dbReference type="NCBI Taxonomy" id="415426"/>
    <lineage>
        <taxon>Archaea</taxon>
        <taxon>Thermoproteota</taxon>
        <taxon>Thermoprotei</taxon>
        <taxon>Desulfurococcales</taxon>
        <taxon>Pyrodictiaceae</taxon>
        <taxon>Hyperthermus</taxon>
    </lineage>
</organism>
<name>G3P_HYPBU</name>
<dbReference type="EC" id="1.2.1.59" evidence="1"/>
<dbReference type="EMBL" id="CP000493">
    <property type="protein sequence ID" value="ABM80787.1"/>
    <property type="molecule type" value="Genomic_DNA"/>
</dbReference>
<dbReference type="RefSeq" id="WP_011822105.1">
    <property type="nucleotide sequence ID" value="NC_008818.1"/>
</dbReference>
<dbReference type="SMR" id="A2BLC6"/>
<dbReference type="STRING" id="415426.Hbut_0939"/>
<dbReference type="EnsemblBacteria" id="ABM80787">
    <property type="protein sequence ID" value="ABM80787"/>
    <property type="gene ID" value="Hbut_0939"/>
</dbReference>
<dbReference type="GeneID" id="4782951"/>
<dbReference type="KEGG" id="hbu:Hbut_0939"/>
<dbReference type="eggNOG" id="arCOG00493">
    <property type="taxonomic scope" value="Archaea"/>
</dbReference>
<dbReference type="HOGENOM" id="CLU_069533_0_0_2"/>
<dbReference type="OrthoDB" id="295712at2157"/>
<dbReference type="UniPathway" id="UPA00109">
    <property type="reaction ID" value="UER00184"/>
</dbReference>
<dbReference type="Proteomes" id="UP000002593">
    <property type="component" value="Chromosome"/>
</dbReference>
<dbReference type="GO" id="GO:0005737">
    <property type="term" value="C:cytoplasm"/>
    <property type="evidence" value="ECO:0007669"/>
    <property type="project" value="UniProtKB-SubCell"/>
</dbReference>
<dbReference type="GO" id="GO:0008839">
    <property type="term" value="F:4-hydroxy-tetrahydrodipicolinate reductase"/>
    <property type="evidence" value="ECO:0007669"/>
    <property type="project" value="InterPro"/>
</dbReference>
<dbReference type="GO" id="GO:0004365">
    <property type="term" value="F:glyceraldehyde-3-phosphate dehydrogenase (NAD+) (phosphorylating) activity"/>
    <property type="evidence" value="ECO:0007669"/>
    <property type="project" value="UniProtKB-UniRule"/>
</dbReference>
<dbReference type="GO" id="GO:0047100">
    <property type="term" value="F:glyceraldehyde-3-phosphate dehydrogenase (NADP+) (phosphorylating) activity"/>
    <property type="evidence" value="ECO:0007669"/>
    <property type="project" value="RHEA"/>
</dbReference>
<dbReference type="GO" id="GO:0051287">
    <property type="term" value="F:NAD binding"/>
    <property type="evidence" value="ECO:0007669"/>
    <property type="project" value="InterPro"/>
</dbReference>
<dbReference type="GO" id="GO:0050661">
    <property type="term" value="F:NADP binding"/>
    <property type="evidence" value="ECO:0007669"/>
    <property type="project" value="InterPro"/>
</dbReference>
<dbReference type="GO" id="GO:0006096">
    <property type="term" value="P:glycolytic process"/>
    <property type="evidence" value="ECO:0007669"/>
    <property type="project" value="UniProtKB-UniRule"/>
</dbReference>
<dbReference type="GO" id="GO:0009089">
    <property type="term" value="P:lysine biosynthetic process via diaminopimelate"/>
    <property type="evidence" value="ECO:0007669"/>
    <property type="project" value="InterPro"/>
</dbReference>
<dbReference type="CDD" id="cd18127">
    <property type="entry name" value="GAPDH_II_C"/>
    <property type="match status" value="1"/>
</dbReference>
<dbReference type="CDD" id="cd02278">
    <property type="entry name" value="GAPDH_II_N"/>
    <property type="match status" value="1"/>
</dbReference>
<dbReference type="Gene3D" id="3.30.360.10">
    <property type="entry name" value="Dihydrodipicolinate Reductase, domain 2"/>
    <property type="match status" value="1"/>
</dbReference>
<dbReference type="Gene3D" id="3.40.50.720">
    <property type="entry name" value="NAD(P)-binding Rossmann-like Domain"/>
    <property type="match status" value="1"/>
</dbReference>
<dbReference type="HAMAP" id="MF_00559">
    <property type="entry name" value="G3P_dehdrog_arch"/>
    <property type="match status" value="1"/>
</dbReference>
<dbReference type="InterPro" id="IPR000846">
    <property type="entry name" value="DapB_N"/>
</dbReference>
<dbReference type="InterPro" id="IPR020831">
    <property type="entry name" value="GlycerAld/Erythrose_P_DH"/>
</dbReference>
<dbReference type="InterPro" id="IPR020830">
    <property type="entry name" value="GlycerAld_3-P_DH_AS"/>
</dbReference>
<dbReference type="InterPro" id="IPR020829">
    <property type="entry name" value="GlycerAld_3-P_DH_cat"/>
</dbReference>
<dbReference type="InterPro" id="IPR020828">
    <property type="entry name" value="GlycerAld_3-P_DH_NAD(P)-bd"/>
</dbReference>
<dbReference type="InterPro" id="IPR006436">
    <property type="entry name" value="Glyceraldehyde-3-P_DH_2_arc"/>
</dbReference>
<dbReference type="InterPro" id="IPR036291">
    <property type="entry name" value="NAD(P)-bd_dom_sf"/>
</dbReference>
<dbReference type="NCBIfam" id="TIGR01546">
    <property type="entry name" value="GAPDH-II_archae"/>
    <property type="match status" value="1"/>
</dbReference>
<dbReference type="NCBIfam" id="NF003251">
    <property type="entry name" value="PRK04207.1"/>
    <property type="match status" value="1"/>
</dbReference>
<dbReference type="Pfam" id="PF01113">
    <property type="entry name" value="DapB_N"/>
    <property type="match status" value="1"/>
</dbReference>
<dbReference type="Pfam" id="PF02800">
    <property type="entry name" value="Gp_dh_C"/>
    <property type="match status" value="1"/>
</dbReference>
<dbReference type="PIRSF" id="PIRSF000149">
    <property type="entry name" value="GAP_DH"/>
    <property type="match status" value="1"/>
</dbReference>
<dbReference type="SMART" id="SM00846">
    <property type="entry name" value="Gp_dh_N"/>
    <property type="match status" value="1"/>
</dbReference>
<dbReference type="SUPFAM" id="SSF55347">
    <property type="entry name" value="Glyceraldehyde-3-phosphate dehydrogenase-like, C-terminal domain"/>
    <property type="match status" value="1"/>
</dbReference>
<dbReference type="SUPFAM" id="SSF51735">
    <property type="entry name" value="NAD(P)-binding Rossmann-fold domains"/>
    <property type="match status" value="1"/>
</dbReference>
<dbReference type="PROSITE" id="PS00071">
    <property type="entry name" value="GAPDH"/>
    <property type="match status" value="1"/>
</dbReference>
<evidence type="ECO:0000255" key="1">
    <source>
        <dbReference type="HAMAP-Rule" id="MF_00559"/>
    </source>
</evidence>
<sequence length="343" mass="37560">MARVRVGVNGFGTIGKRVAEAIMLQPDMELVGVTKTKPDYTAKYAVSRGIPVYVPKESLEEFQAKGIEPAGTIEELLEKVDVIVDATPGGTGRKYKPLYEKAGVKMIFQGGEKADIAELSFSTLCNYEQALGKTSLRVVSCNTTGLLRAICSISRLAPVRRVRATIVRRAADPKEIKRGPVNAIKPDPVKTPSHHALDVKTVLPDLDIVTMAVVVPTTLMHVHIVYAELEKPVTREDVVATFESTPRILLADASYGLASTAELVEYARDLGRKRYDIPELIVWLDSIAVNGVEVMWMQAVHQEAIVVPENIDAIRAVAELAKTAEETIRITDERLGLLKGRIP</sequence>
<accession>A2BLC6</accession>
<feature type="chain" id="PRO_0000300970" description="Glyceraldehyde-3-phosphate dehydrogenase">
    <location>
        <begin position="1"/>
        <end position="343"/>
    </location>
</feature>
<feature type="active site" description="Nucleophile" evidence="1">
    <location>
        <position position="141"/>
    </location>
</feature>
<feature type="binding site" evidence="1">
    <location>
        <begin position="13"/>
        <end position="14"/>
    </location>
    <ligand>
        <name>NAD(+)</name>
        <dbReference type="ChEBI" id="CHEBI:57540"/>
    </ligand>
</feature>
<feature type="binding site" evidence="1">
    <location>
        <position position="111"/>
    </location>
    <ligand>
        <name>NAD(+)</name>
        <dbReference type="ChEBI" id="CHEBI:57540"/>
    </ligand>
</feature>
<feature type="binding site" evidence="1">
    <location>
        <begin position="140"/>
        <end position="142"/>
    </location>
    <ligand>
        <name>D-glyceraldehyde 3-phosphate</name>
        <dbReference type="ChEBI" id="CHEBI:59776"/>
    </ligand>
</feature>
<feature type="binding site" evidence="1">
    <location>
        <position position="169"/>
    </location>
    <ligand>
        <name>NAD(+)</name>
        <dbReference type="ChEBI" id="CHEBI:57540"/>
    </ligand>
</feature>
<feature type="binding site" evidence="1">
    <location>
        <begin position="195"/>
        <end position="196"/>
    </location>
    <ligand>
        <name>D-glyceraldehyde 3-phosphate</name>
        <dbReference type="ChEBI" id="CHEBI:59776"/>
    </ligand>
</feature>
<feature type="binding site" evidence="1">
    <location>
        <position position="302"/>
    </location>
    <ligand>
        <name>NAD(+)</name>
        <dbReference type="ChEBI" id="CHEBI:57540"/>
    </ligand>
</feature>
<comment type="catalytic activity">
    <reaction evidence="1">
        <text>D-glyceraldehyde 3-phosphate + phosphate + NADP(+) = (2R)-3-phospho-glyceroyl phosphate + NADPH + H(+)</text>
        <dbReference type="Rhea" id="RHEA:10296"/>
        <dbReference type="ChEBI" id="CHEBI:15378"/>
        <dbReference type="ChEBI" id="CHEBI:43474"/>
        <dbReference type="ChEBI" id="CHEBI:57604"/>
        <dbReference type="ChEBI" id="CHEBI:57783"/>
        <dbReference type="ChEBI" id="CHEBI:58349"/>
        <dbReference type="ChEBI" id="CHEBI:59776"/>
        <dbReference type="EC" id="1.2.1.59"/>
    </reaction>
</comment>
<comment type="catalytic activity">
    <reaction evidence="1">
        <text>D-glyceraldehyde 3-phosphate + phosphate + NAD(+) = (2R)-3-phospho-glyceroyl phosphate + NADH + H(+)</text>
        <dbReference type="Rhea" id="RHEA:10300"/>
        <dbReference type="ChEBI" id="CHEBI:15378"/>
        <dbReference type="ChEBI" id="CHEBI:43474"/>
        <dbReference type="ChEBI" id="CHEBI:57540"/>
        <dbReference type="ChEBI" id="CHEBI:57604"/>
        <dbReference type="ChEBI" id="CHEBI:57945"/>
        <dbReference type="ChEBI" id="CHEBI:59776"/>
        <dbReference type="EC" id="1.2.1.59"/>
    </reaction>
</comment>
<comment type="pathway">
    <text evidence="1">Carbohydrate degradation; glycolysis; pyruvate from D-glyceraldehyde 3-phosphate: step 1/5.</text>
</comment>
<comment type="subunit">
    <text evidence="1">Homotetramer.</text>
</comment>
<comment type="subcellular location">
    <subcellularLocation>
        <location evidence="1">Cytoplasm</location>
    </subcellularLocation>
</comment>
<comment type="similarity">
    <text evidence="1">Belongs to the glyceraldehyde-3-phosphate dehydrogenase family.</text>
</comment>
<reference key="1">
    <citation type="journal article" date="2007" name="Archaea">
        <title>The genome of Hyperthermus butylicus: a sulfur-reducing, peptide fermenting, neutrophilic Crenarchaeote growing up to 108 degrees C.</title>
        <authorList>
            <person name="Bruegger K."/>
            <person name="Chen L."/>
            <person name="Stark M."/>
            <person name="Zibat A."/>
            <person name="Redder P."/>
            <person name="Ruepp A."/>
            <person name="Awayez M."/>
            <person name="She Q."/>
            <person name="Garrett R.A."/>
            <person name="Klenk H.-P."/>
        </authorList>
    </citation>
    <scope>NUCLEOTIDE SEQUENCE [LARGE SCALE GENOMIC DNA]</scope>
    <source>
        <strain>DSM 5456 / JCM 9403 / PLM1-5</strain>
    </source>
</reference>